<keyword id="KW-0150">Chloroplast</keyword>
<keyword id="KW-0249">Electron transport</keyword>
<keyword id="KW-0349">Heme</keyword>
<keyword id="KW-0408">Iron</keyword>
<keyword id="KW-0472">Membrane</keyword>
<keyword id="KW-0479">Metal-binding</keyword>
<keyword id="KW-0602">Photosynthesis</keyword>
<keyword id="KW-0604">Photosystem II</keyword>
<keyword id="KW-0934">Plastid</keyword>
<keyword id="KW-0793">Thylakoid</keyword>
<keyword id="KW-0812">Transmembrane</keyword>
<keyword id="KW-1133">Transmembrane helix</keyword>
<keyword id="KW-0813">Transport</keyword>
<name>PSBE_EUGGR</name>
<proteinExistence type="inferred from homology"/>
<sequence length="81" mass="9222">MAGSTGERPFSDIITSIRYWVIHSVTIPSLFVGGWIFVSTGIVYDIFGTPRPSEYFTETRQQAPLISDRFNALEQMDQFTK</sequence>
<feature type="chain" id="PRO_0000200309" description="Cytochrome b559 subunit alpha">
    <location>
        <begin position="1"/>
        <end position="81"/>
    </location>
</feature>
<feature type="transmembrane region" description="Helical" evidence="1">
    <location>
        <begin position="21"/>
        <end position="35"/>
    </location>
</feature>
<feature type="binding site" description="axial binding residue" evidence="1">
    <location>
        <position position="23"/>
    </location>
    <ligand>
        <name>heme</name>
        <dbReference type="ChEBI" id="CHEBI:30413"/>
        <note>ligand shared with beta subunit</note>
    </ligand>
    <ligandPart>
        <name>Fe</name>
        <dbReference type="ChEBI" id="CHEBI:18248"/>
    </ligandPart>
</feature>
<accession>P05333</accession>
<reference key="1">
    <citation type="journal article" date="1988" name="Curr. Genet.">
        <title>Organization of the psbE, psbF, orf38, and orf42 gene loci on the Euglena gracilis chloroplast genome.</title>
        <authorList>
            <person name="Cushman J.C."/>
            <person name="Christopher D.A."/>
            <person name="Little M.C."/>
            <person name="Hallick R.B."/>
            <person name="Price C.A."/>
        </authorList>
    </citation>
    <scope>NUCLEOTIDE SEQUENCE [GENOMIC DNA]</scope>
    <source>
        <strain>Z / UTEX 753</strain>
    </source>
</reference>
<reference key="2">
    <citation type="journal article" date="1993" name="Nucleic Acids Res.">
        <title>Complete sequence of Euglena gracilis chloroplast DNA.</title>
        <authorList>
            <person name="Hallick R.B."/>
            <person name="Hong L."/>
            <person name="Drager R.G."/>
            <person name="Favreau M.R."/>
            <person name="Monfort A."/>
            <person name="Orsat B."/>
            <person name="Spielmann A."/>
            <person name="Stutz E."/>
        </authorList>
    </citation>
    <scope>NUCLEOTIDE SEQUENCE [LARGE SCALE GENOMIC DNA]</scope>
    <source>
        <strain>Z / UTEX 753</strain>
    </source>
</reference>
<gene>
    <name evidence="1" type="primary">psbE</name>
</gene>
<comment type="function">
    <text evidence="1">This b-type cytochrome is tightly associated with the reaction center of photosystem II (PSII). PSII is a light-driven water:plastoquinone oxidoreductase that uses light energy to abstract electrons from H(2)O, generating O(2) and a proton gradient subsequently used for ATP formation. It consists of a core antenna complex that captures photons, and an electron transfer chain that converts photonic excitation into a charge separation.</text>
</comment>
<comment type="cofactor">
    <cofactor evidence="1">
        <name>heme b</name>
        <dbReference type="ChEBI" id="CHEBI:60344"/>
    </cofactor>
    <text evidence="1">With its partner (PsbF) binds heme. PSII binds additional chlorophylls, carotenoids and specific lipids.</text>
</comment>
<comment type="subunit">
    <text evidence="2">Heterodimer of an alpha subunit and a beta subunit. PSII is composed of 1 copy each of membrane proteins PsbA, PsbB, PsbC, PsbD, PsbE, PsbF, PsbH, PsbI, PsbJ, PsbK, PsbL, PsbM, PsbT, PsbY, PsbZ, Psb30/Ycf12, at least 3 peripheral proteins of the oxygen-evolving complex and a large number of cofactors. It forms dimeric complexes.</text>
</comment>
<comment type="subcellular location">
    <subcellularLocation>
        <location evidence="1">Plastid</location>
        <location evidence="1">Chloroplast thylakoid membrane</location>
        <topology evidence="1">Single-pass membrane protein</topology>
    </subcellularLocation>
</comment>
<comment type="similarity">
    <text evidence="1">Belongs to the PsbE/PsbF family.</text>
</comment>
<geneLocation type="chloroplast"/>
<evidence type="ECO:0000255" key="1">
    <source>
        <dbReference type="HAMAP-Rule" id="MF_00642"/>
    </source>
</evidence>
<evidence type="ECO:0000305" key="2"/>
<dbReference type="EMBL" id="Z11874">
    <property type="protein sequence ID" value="CAA77912.1"/>
    <property type="molecule type" value="Genomic_DNA"/>
</dbReference>
<dbReference type="EMBL" id="X07073">
    <property type="protein sequence ID" value="CAA30108.1"/>
    <property type="molecule type" value="Genomic_DNA"/>
</dbReference>
<dbReference type="EMBL" id="X70810">
    <property type="protein sequence ID" value="CAA50095.1"/>
    <property type="molecule type" value="Genomic_DNA"/>
</dbReference>
<dbReference type="PIR" id="S00689">
    <property type="entry name" value="S00689"/>
</dbReference>
<dbReference type="RefSeq" id="NP_041908.1">
    <property type="nucleotide sequence ID" value="NC_001603.2"/>
</dbReference>
<dbReference type="SMR" id="P05333"/>
<dbReference type="GeneID" id="807515"/>
<dbReference type="GO" id="GO:0009535">
    <property type="term" value="C:chloroplast thylakoid membrane"/>
    <property type="evidence" value="ECO:0007669"/>
    <property type="project" value="UniProtKB-SubCell"/>
</dbReference>
<dbReference type="GO" id="GO:0009539">
    <property type="term" value="C:photosystem II reaction center"/>
    <property type="evidence" value="ECO:0007669"/>
    <property type="project" value="InterPro"/>
</dbReference>
<dbReference type="GO" id="GO:0009055">
    <property type="term" value="F:electron transfer activity"/>
    <property type="evidence" value="ECO:0007669"/>
    <property type="project" value="UniProtKB-UniRule"/>
</dbReference>
<dbReference type="GO" id="GO:0020037">
    <property type="term" value="F:heme binding"/>
    <property type="evidence" value="ECO:0007669"/>
    <property type="project" value="InterPro"/>
</dbReference>
<dbReference type="GO" id="GO:0005506">
    <property type="term" value="F:iron ion binding"/>
    <property type="evidence" value="ECO:0007669"/>
    <property type="project" value="UniProtKB-UniRule"/>
</dbReference>
<dbReference type="GO" id="GO:0009767">
    <property type="term" value="P:photosynthetic electron transport chain"/>
    <property type="evidence" value="ECO:0007669"/>
    <property type="project" value="InterPro"/>
</dbReference>
<dbReference type="Gene3D" id="1.20.5.860">
    <property type="entry name" value="Photosystem II cytochrome b559, alpha subunit"/>
    <property type="match status" value="1"/>
</dbReference>
<dbReference type="HAMAP" id="MF_00642">
    <property type="entry name" value="PSII_PsbE"/>
    <property type="match status" value="1"/>
</dbReference>
<dbReference type="InterPro" id="IPR006217">
    <property type="entry name" value="PSII_cyt_b559_asu"/>
</dbReference>
<dbReference type="InterPro" id="IPR037025">
    <property type="entry name" value="PSII_cyt_b559_asu_sf"/>
</dbReference>
<dbReference type="InterPro" id="IPR006216">
    <property type="entry name" value="PSII_cyt_b559_CS"/>
</dbReference>
<dbReference type="InterPro" id="IPR013081">
    <property type="entry name" value="PSII_cyt_b559_N"/>
</dbReference>
<dbReference type="InterPro" id="IPR013082">
    <property type="entry name" value="PSII_cytb559_asu_lum"/>
</dbReference>
<dbReference type="NCBIfam" id="TIGR01332">
    <property type="entry name" value="cyt_b559_alpha"/>
    <property type="match status" value="1"/>
</dbReference>
<dbReference type="PANTHER" id="PTHR33391">
    <property type="entry name" value="CYTOCHROME B559 SUBUNIT BETA-RELATED"/>
    <property type="match status" value="1"/>
</dbReference>
<dbReference type="PANTHER" id="PTHR33391:SF9">
    <property type="entry name" value="CYTOCHROME B559 SUBUNIT BETA-RELATED"/>
    <property type="match status" value="1"/>
</dbReference>
<dbReference type="Pfam" id="PF00283">
    <property type="entry name" value="Cytochrom_B559"/>
    <property type="match status" value="1"/>
</dbReference>
<dbReference type="Pfam" id="PF00284">
    <property type="entry name" value="Cytochrom_B559a"/>
    <property type="match status" value="1"/>
</dbReference>
<dbReference type="PIRSF" id="PIRSF000036">
    <property type="entry name" value="PsbE"/>
    <property type="match status" value="1"/>
</dbReference>
<dbReference type="SUPFAM" id="SSF161045">
    <property type="entry name" value="Cytochrome b559 subunits"/>
    <property type="match status" value="1"/>
</dbReference>
<dbReference type="PROSITE" id="PS00537">
    <property type="entry name" value="CYTOCHROME_B559"/>
    <property type="match status" value="1"/>
</dbReference>
<organism>
    <name type="scientific">Euglena gracilis</name>
    <dbReference type="NCBI Taxonomy" id="3039"/>
    <lineage>
        <taxon>Eukaryota</taxon>
        <taxon>Discoba</taxon>
        <taxon>Euglenozoa</taxon>
        <taxon>Euglenida</taxon>
        <taxon>Spirocuta</taxon>
        <taxon>Euglenophyceae</taxon>
        <taxon>Euglenales</taxon>
        <taxon>Euglenaceae</taxon>
        <taxon>Euglena</taxon>
    </lineage>
</organism>
<protein>
    <recommendedName>
        <fullName evidence="1">Cytochrome b559 subunit alpha</fullName>
    </recommendedName>
    <alternativeName>
        <fullName evidence="1">PSII reaction center subunit V</fullName>
    </alternativeName>
</protein>